<organism>
    <name type="scientific">Xanthomonas campestris pv. campestris (strain 8004)</name>
    <dbReference type="NCBI Taxonomy" id="314565"/>
    <lineage>
        <taxon>Bacteria</taxon>
        <taxon>Pseudomonadati</taxon>
        <taxon>Pseudomonadota</taxon>
        <taxon>Gammaproteobacteria</taxon>
        <taxon>Lysobacterales</taxon>
        <taxon>Lysobacteraceae</taxon>
        <taxon>Xanthomonas</taxon>
    </lineage>
</organism>
<feature type="chain" id="PRO_0000224737" description="UDP-N-acetylenolpyruvoylglucosamine reductase">
    <location>
        <begin position="1"/>
        <end position="350"/>
    </location>
</feature>
<feature type="domain" description="FAD-binding PCMH-type" evidence="1">
    <location>
        <begin position="24"/>
        <end position="195"/>
    </location>
</feature>
<feature type="active site" evidence="1">
    <location>
        <position position="172"/>
    </location>
</feature>
<feature type="active site" description="Proton donor" evidence="1">
    <location>
        <position position="245"/>
    </location>
</feature>
<feature type="active site" evidence="1">
    <location>
        <position position="342"/>
    </location>
</feature>
<keyword id="KW-0131">Cell cycle</keyword>
<keyword id="KW-0132">Cell division</keyword>
<keyword id="KW-0133">Cell shape</keyword>
<keyword id="KW-0961">Cell wall biogenesis/degradation</keyword>
<keyword id="KW-0963">Cytoplasm</keyword>
<keyword id="KW-0274">FAD</keyword>
<keyword id="KW-0285">Flavoprotein</keyword>
<keyword id="KW-0521">NADP</keyword>
<keyword id="KW-0560">Oxidoreductase</keyword>
<keyword id="KW-0573">Peptidoglycan synthesis</keyword>
<protein>
    <recommendedName>
        <fullName evidence="1">UDP-N-acetylenolpyruvoylglucosamine reductase</fullName>
        <ecNumber evidence="1">1.3.1.98</ecNumber>
    </recommendedName>
    <alternativeName>
        <fullName evidence="1">UDP-N-acetylmuramate dehydrogenase</fullName>
    </alternativeName>
</protein>
<reference key="1">
    <citation type="journal article" date="2005" name="Genome Res.">
        <title>Comparative and functional genomic analyses of the pathogenicity of phytopathogen Xanthomonas campestris pv. campestris.</title>
        <authorList>
            <person name="Qian W."/>
            <person name="Jia Y."/>
            <person name="Ren S.-X."/>
            <person name="He Y.-Q."/>
            <person name="Feng J.-X."/>
            <person name="Lu L.-F."/>
            <person name="Sun Q."/>
            <person name="Ying G."/>
            <person name="Tang D.-J."/>
            <person name="Tang H."/>
            <person name="Wu W."/>
            <person name="Hao P."/>
            <person name="Wang L."/>
            <person name="Jiang B.-L."/>
            <person name="Zeng S."/>
            <person name="Gu W.-Y."/>
            <person name="Lu G."/>
            <person name="Rong L."/>
            <person name="Tian Y."/>
            <person name="Yao Z."/>
            <person name="Fu G."/>
            <person name="Chen B."/>
            <person name="Fang R."/>
            <person name="Qiang B."/>
            <person name="Chen Z."/>
            <person name="Zhao G.-P."/>
            <person name="Tang J.-L."/>
            <person name="He C."/>
        </authorList>
    </citation>
    <scope>NUCLEOTIDE SEQUENCE [LARGE SCALE GENOMIC DNA]</scope>
    <source>
        <strain>8004</strain>
    </source>
</reference>
<sequence length="350" mass="37634">MSAASPLRWQLIEHAPLRALNTFHVDATARWLLNIHAPEALPDALAAPQIAGQPLLVLGSGSNVLLAGDPPGCVLCFDNRDITIIAHHADHAIVRAGAGVNWHGLVMYSLQQGLSGLENLALIPGTVGACPIQNIGAYGAQVSDFIHVVEAYDRGTEQFVRLNPAECAFGYRDSVFKQQPDRYLIVAVEFNLPLLHELRLDYAGIRDELARMGAELAGAADVAQAVINIRQRKLPDPEVLGNAGSFFKNPLLPSEQIAALQASFADMPVFPGEQPGQGKLSAAWLIEQCGWKGKREGDAGISEAHALVLVNHGSASGAQLLAFARQVAESVRERYSVILEPEPRVIGAHW</sequence>
<name>MURB_XANC8</name>
<dbReference type="EC" id="1.3.1.98" evidence="1"/>
<dbReference type="EMBL" id="CP000050">
    <property type="protein sequence ID" value="AAY49499.1"/>
    <property type="molecule type" value="Genomic_DNA"/>
</dbReference>
<dbReference type="RefSeq" id="WP_011036960.1">
    <property type="nucleotide sequence ID" value="NZ_CP155948.1"/>
</dbReference>
<dbReference type="SMR" id="Q4UTX4"/>
<dbReference type="KEGG" id="xcb:XC_2449"/>
<dbReference type="HOGENOM" id="CLU_035304_0_0_6"/>
<dbReference type="UniPathway" id="UPA00219"/>
<dbReference type="Proteomes" id="UP000000420">
    <property type="component" value="Chromosome"/>
</dbReference>
<dbReference type="GO" id="GO:0005829">
    <property type="term" value="C:cytosol"/>
    <property type="evidence" value="ECO:0007669"/>
    <property type="project" value="TreeGrafter"/>
</dbReference>
<dbReference type="GO" id="GO:0071949">
    <property type="term" value="F:FAD binding"/>
    <property type="evidence" value="ECO:0007669"/>
    <property type="project" value="InterPro"/>
</dbReference>
<dbReference type="GO" id="GO:0008762">
    <property type="term" value="F:UDP-N-acetylmuramate dehydrogenase activity"/>
    <property type="evidence" value="ECO:0007669"/>
    <property type="project" value="UniProtKB-UniRule"/>
</dbReference>
<dbReference type="GO" id="GO:0051301">
    <property type="term" value="P:cell division"/>
    <property type="evidence" value="ECO:0007669"/>
    <property type="project" value="UniProtKB-KW"/>
</dbReference>
<dbReference type="GO" id="GO:0071555">
    <property type="term" value="P:cell wall organization"/>
    <property type="evidence" value="ECO:0007669"/>
    <property type="project" value="UniProtKB-KW"/>
</dbReference>
<dbReference type="GO" id="GO:0009252">
    <property type="term" value="P:peptidoglycan biosynthetic process"/>
    <property type="evidence" value="ECO:0007669"/>
    <property type="project" value="UniProtKB-UniRule"/>
</dbReference>
<dbReference type="GO" id="GO:0008360">
    <property type="term" value="P:regulation of cell shape"/>
    <property type="evidence" value="ECO:0007669"/>
    <property type="project" value="UniProtKB-KW"/>
</dbReference>
<dbReference type="Gene3D" id="3.30.465.10">
    <property type="match status" value="1"/>
</dbReference>
<dbReference type="Gene3D" id="3.90.78.10">
    <property type="entry name" value="UDP-N-acetylenolpyruvoylglucosamine reductase, C-terminal domain"/>
    <property type="match status" value="1"/>
</dbReference>
<dbReference type="Gene3D" id="3.30.43.10">
    <property type="entry name" value="Uridine Diphospho-n-acetylenolpyruvylglucosamine Reductase, domain 2"/>
    <property type="match status" value="1"/>
</dbReference>
<dbReference type="HAMAP" id="MF_00037">
    <property type="entry name" value="MurB"/>
    <property type="match status" value="1"/>
</dbReference>
<dbReference type="InterPro" id="IPR016166">
    <property type="entry name" value="FAD-bd_PCMH"/>
</dbReference>
<dbReference type="InterPro" id="IPR036318">
    <property type="entry name" value="FAD-bd_PCMH-like_sf"/>
</dbReference>
<dbReference type="InterPro" id="IPR016167">
    <property type="entry name" value="FAD-bd_PCMH_sub1"/>
</dbReference>
<dbReference type="InterPro" id="IPR016169">
    <property type="entry name" value="FAD-bd_PCMH_sub2"/>
</dbReference>
<dbReference type="InterPro" id="IPR003170">
    <property type="entry name" value="MurB"/>
</dbReference>
<dbReference type="InterPro" id="IPR011601">
    <property type="entry name" value="MurB_C"/>
</dbReference>
<dbReference type="InterPro" id="IPR036635">
    <property type="entry name" value="MurB_C_sf"/>
</dbReference>
<dbReference type="InterPro" id="IPR006094">
    <property type="entry name" value="Oxid_FAD_bind_N"/>
</dbReference>
<dbReference type="NCBIfam" id="TIGR00179">
    <property type="entry name" value="murB"/>
    <property type="match status" value="1"/>
</dbReference>
<dbReference type="NCBIfam" id="NF000755">
    <property type="entry name" value="PRK00046.1"/>
    <property type="match status" value="1"/>
</dbReference>
<dbReference type="NCBIfam" id="NF010478">
    <property type="entry name" value="PRK13903.1"/>
    <property type="match status" value="1"/>
</dbReference>
<dbReference type="PANTHER" id="PTHR21071">
    <property type="entry name" value="UDP-N-ACETYLENOLPYRUVOYLGLUCOSAMINE REDUCTASE"/>
    <property type="match status" value="1"/>
</dbReference>
<dbReference type="PANTHER" id="PTHR21071:SF4">
    <property type="entry name" value="UDP-N-ACETYLENOLPYRUVOYLGLUCOSAMINE REDUCTASE"/>
    <property type="match status" value="1"/>
</dbReference>
<dbReference type="Pfam" id="PF01565">
    <property type="entry name" value="FAD_binding_4"/>
    <property type="match status" value="1"/>
</dbReference>
<dbReference type="Pfam" id="PF02873">
    <property type="entry name" value="MurB_C"/>
    <property type="match status" value="1"/>
</dbReference>
<dbReference type="SUPFAM" id="SSF56176">
    <property type="entry name" value="FAD-binding/transporter-associated domain-like"/>
    <property type="match status" value="1"/>
</dbReference>
<dbReference type="SUPFAM" id="SSF56194">
    <property type="entry name" value="Uridine diphospho-N-Acetylenolpyruvylglucosamine reductase, MurB, C-terminal domain"/>
    <property type="match status" value="1"/>
</dbReference>
<dbReference type="PROSITE" id="PS51387">
    <property type="entry name" value="FAD_PCMH"/>
    <property type="match status" value="1"/>
</dbReference>
<evidence type="ECO:0000255" key="1">
    <source>
        <dbReference type="HAMAP-Rule" id="MF_00037"/>
    </source>
</evidence>
<accession>Q4UTX4</accession>
<gene>
    <name evidence="1" type="primary">murB</name>
    <name type="ordered locus">XC_2449</name>
</gene>
<proteinExistence type="inferred from homology"/>
<comment type="function">
    <text evidence="1">Cell wall formation.</text>
</comment>
<comment type="catalytic activity">
    <reaction evidence="1">
        <text>UDP-N-acetyl-alpha-D-muramate + NADP(+) = UDP-N-acetyl-3-O-(1-carboxyvinyl)-alpha-D-glucosamine + NADPH + H(+)</text>
        <dbReference type="Rhea" id="RHEA:12248"/>
        <dbReference type="ChEBI" id="CHEBI:15378"/>
        <dbReference type="ChEBI" id="CHEBI:57783"/>
        <dbReference type="ChEBI" id="CHEBI:58349"/>
        <dbReference type="ChEBI" id="CHEBI:68483"/>
        <dbReference type="ChEBI" id="CHEBI:70757"/>
        <dbReference type="EC" id="1.3.1.98"/>
    </reaction>
</comment>
<comment type="cofactor">
    <cofactor evidence="1">
        <name>FAD</name>
        <dbReference type="ChEBI" id="CHEBI:57692"/>
    </cofactor>
</comment>
<comment type="pathway">
    <text evidence="1">Cell wall biogenesis; peptidoglycan biosynthesis.</text>
</comment>
<comment type="subcellular location">
    <subcellularLocation>
        <location evidence="1">Cytoplasm</location>
    </subcellularLocation>
</comment>
<comment type="similarity">
    <text evidence="1">Belongs to the MurB family.</text>
</comment>